<gene>
    <name evidence="1" type="primary">hldE</name>
    <name type="ordered locus">HPP12_0858</name>
</gene>
<sequence length="461" mass="50873">MKKILVVGDLIADYYLWGKSERLSPEAPVPVLEVQKENKNLGGAANVANNLISLKAKVFLCGVVGDDLEGKHFLNALKARNIDTSGILTDKTRCTTLKTRIIAQNQQIVRVDKEIKDPLNADLRKRLLDFFTEKIQEIDGVILSDYNKGVLDFELTQTMIALANQHHKLILCDPKGKDYSKYSHASLITPNRAELEHALHLKLDSHANLSKALQILKETYQIAMPLVTLSEQGIAFLEKGELVNCPTIAKEVYDVTGAGDTVIASLTLSLLELMSLKDACEFANAAAAVVVGKMGSALASLEEIALILNQTHPKILPLEKLLETLDQQKIVFTNGCFDLLHKGHASYLQKAKALGDILIVGLNSDNSVKRLKGDKRPIVSEKDRAFLLASLSCVDYVVVFEEDTPIKLIQALKPDILVKGADYLNKEVIGSEFAKETCLMEFEEGYSTSAIIEKIKRTHND</sequence>
<proteinExistence type="inferred from homology"/>
<reference key="1">
    <citation type="submission" date="2008-10" db="EMBL/GenBank/DDBJ databases">
        <title>The complete genome sequence of Helicobacter pylori strain P12.</title>
        <authorList>
            <person name="Fischer W."/>
            <person name="Windhager L."/>
            <person name="Karnholz A."/>
            <person name="Zeiller M."/>
            <person name="Zimmer R."/>
            <person name="Haas R."/>
        </authorList>
    </citation>
    <scope>NUCLEOTIDE SEQUENCE [LARGE SCALE GENOMIC DNA]</scope>
    <source>
        <strain>P12</strain>
    </source>
</reference>
<name>HLDE_HELP2</name>
<dbReference type="EC" id="2.7.1.167" evidence="1"/>
<dbReference type="EC" id="2.7.7.70" evidence="1"/>
<dbReference type="EMBL" id="CP001217">
    <property type="protein sequence ID" value="ACJ08010.1"/>
    <property type="molecule type" value="Genomic_DNA"/>
</dbReference>
<dbReference type="SMR" id="B6JM82"/>
<dbReference type="KEGG" id="hpp:HPP12_0858"/>
<dbReference type="HOGENOM" id="CLU_021150_2_1_7"/>
<dbReference type="UniPathway" id="UPA00356">
    <property type="reaction ID" value="UER00437"/>
</dbReference>
<dbReference type="UniPathway" id="UPA00356">
    <property type="reaction ID" value="UER00439"/>
</dbReference>
<dbReference type="Proteomes" id="UP000008198">
    <property type="component" value="Chromosome"/>
</dbReference>
<dbReference type="GO" id="GO:0005829">
    <property type="term" value="C:cytosol"/>
    <property type="evidence" value="ECO:0007669"/>
    <property type="project" value="TreeGrafter"/>
</dbReference>
<dbReference type="GO" id="GO:0005524">
    <property type="term" value="F:ATP binding"/>
    <property type="evidence" value="ECO:0007669"/>
    <property type="project" value="UniProtKB-UniRule"/>
</dbReference>
<dbReference type="GO" id="GO:0033785">
    <property type="term" value="F:heptose 7-phosphate kinase activity"/>
    <property type="evidence" value="ECO:0007669"/>
    <property type="project" value="UniProtKB-UniRule"/>
</dbReference>
<dbReference type="GO" id="GO:0033786">
    <property type="term" value="F:heptose-1-phosphate adenylyltransferase activity"/>
    <property type="evidence" value="ECO:0007669"/>
    <property type="project" value="UniProtKB-UniRule"/>
</dbReference>
<dbReference type="GO" id="GO:0016773">
    <property type="term" value="F:phosphotransferase activity, alcohol group as acceptor"/>
    <property type="evidence" value="ECO:0007669"/>
    <property type="project" value="InterPro"/>
</dbReference>
<dbReference type="GO" id="GO:0097171">
    <property type="term" value="P:ADP-L-glycero-beta-D-manno-heptose biosynthetic process"/>
    <property type="evidence" value="ECO:0007669"/>
    <property type="project" value="UniProtKB-UniPathway"/>
</dbReference>
<dbReference type="CDD" id="cd01172">
    <property type="entry name" value="RfaE_like"/>
    <property type="match status" value="1"/>
</dbReference>
<dbReference type="Gene3D" id="3.40.1190.20">
    <property type="match status" value="1"/>
</dbReference>
<dbReference type="Gene3D" id="3.40.50.620">
    <property type="entry name" value="HUPs"/>
    <property type="match status" value="1"/>
</dbReference>
<dbReference type="HAMAP" id="MF_01603">
    <property type="entry name" value="HldE"/>
    <property type="match status" value="1"/>
</dbReference>
<dbReference type="InterPro" id="IPR023030">
    <property type="entry name" value="Bifunc_HldE"/>
</dbReference>
<dbReference type="InterPro" id="IPR004821">
    <property type="entry name" value="Cyt_trans-like"/>
</dbReference>
<dbReference type="InterPro" id="IPR011611">
    <property type="entry name" value="PfkB_dom"/>
</dbReference>
<dbReference type="InterPro" id="IPR011913">
    <property type="entry name" value="RfaE_dom_I"/>
</dbReference>
<dbReference type="InterPro" id="IPR011914">
    <property type="entry name" value="RfaE_dom_II"/>
</dbReference>
<dbReference type="InterPro" id="IPR029056">
    <property type="entry name" value="Ribokinase-like"/>
</dbReference>
<dbReference type="InterPro" id="IPR014729">
    <property type="entry name" value="Rossmann-like_a/b/a_fold"/>
</dbReference>
<dbReference type="NCBIfam" id="TIGR00125">
    <property type="entry name" value="cyt_tran_rel"/>
    <property type="match status" value="1"/>
</dbReference>
<dbReference type="NCBIfam" id="TIGR02198">
    <property type="entry name" value="rfaE_dom_I"/>
    <property type="match status" value="1"/>
</dbReference>
<dbReference type="NCBIfam" id="TIGR02199">
    <property type="entry name" value="rfaE_dom_II"/>
    <property type="match status" value="1"/>
</dbReference>
<dbReference type="PANTHER" id="PTHR46969">
    <property type="entry name" value="BIFUNCTIONAL PROTEIN HLDE"/>
    <property type="match status" value="1"/>
</dbReference>
<dbReference type="PANTHER" id="PTHR46969:SF1">
    <property type="entry name" value="BIFUNCTIONAL PROTEIN HLDE"/>
    <property type="match status" value="1"/>
</dbReference>
<dbReference type="Pfam" id="PF01467">
    <property type="entry name" value="CTP_transf_like"/>
    <property type="match status" value="1"/>
</dbReference>
<dbReference type="Pfam" id="PF00294">
    <property type="entry name" value="PfkB"/>
    <property type="match status" value="1"/>
</dbReference>
<dbReference type="SUPFAM" id="SSF52374">
    <property type="entry name" value="Nucleotidylyl transferase"/>
    <property type="match status" value="1"/>
</dbReference>
<dbReference type="SUPFAM" id="SSF53613">
    <property type="entry name" value="Ribokinase-like"/>
    <property type="match status" value="1"/>
</dbReference>
<keyword id="KW-0067">ATP-binding</keyword>
<keyword id="KW-0119">Carbohydrate metabolism</keyword>
<keyword id="KW-0418">Kinase</keyword>
<keyword id="KW-0511">Multifunctional enzyme</keyword>
<keyword id="KW-0547">Nucleotide-binding</keyword>
<keyword id="KW-0548">Nucleotidyltransferase</keyword>
<keyword id="KW-0808">Transferase</keyword>
<organism>
    <name type="scientific">Helicobacter pylori (strain P12)</name>
    <dbReference type="NCBI Taxonomy" id="570508"/>
    <lineage>
        <taxon>Bacteria</taxon>
        <taxon>Pseudomonadati</taxon>
        <taxon>Campylobacterota</taxon>
        <taxon>Epsilonproteobacteria</taxon>
        <taxon>Campylobacterales</taxon>
        <taxon>Helicobacteraceae</taxon>
        <taxon>Helicobacter</taxon>
    </lineage>
</organism>
<feature type="chain" id="PRO_1000148127" description="Bifunctional protein HldE">
    <location>
        <begin position="1"/>
        <end position="461"/>
    </location>
</feature>
<feature type="region of interest" description="Ribokinase">
    <location>
        <begin position="1"/>
        <end position="311"/>
    </location>
</feature>
<feature type="region of interest" description="Cytidylyltransferase">
    <location>
        <begin position="332"/>
        <end position="461"/>
    </location>
</feature>
<feature type="active site" evidence="1">
    <location>
        <position position="260"/>
    </location>
</feature>
<feature type="binding site" evidence="1">
    <location>
        <begin position="191"/>
        <end position="194"/>
    </location>
    <ligand>
        <name>ATP</name>
        <dbReference type="ChEBI" id="CHEBI:30616"/>
    </ligand>
</feature>
<evidence type="ECO:0000255" key="1">
    <source>
        <dbReference type="HAMAP-Rule" id="MF_01603"/>
    </source>
</evidence>
<protein>
    <recommendedName>
        <fullName evidence="1">Bifunctional protein HldE</fullName>
    </recommendedName>
    <domain>
        <recommendedName>
            <fullName evidence="1">D-beta-D-heptose 7-phosphate kinase</fullName>
            <ecNumber evidence="1">2.7.1.167</ecNumber>
        </recommendedName>
        <alternativeName>
            <fullName evidence="1">D-beta-D-heptose 7-phosphotransferase</fullName>
        </alternativeName>
        <alternativeName>
            <fullName evidence="1">D-glycero-beta-D-manno-heptose-7-phosphate kinase</fullName>
        </alternativeName>
    </domain>
    <domain>
        <recommendedName>
            <fullName evidence="1">D-beta-D-heptose 1-phosphate adenylyltransferase</fullName>
            <ecNumber evidence="1">2.7.7.70</ecNumber>
        </recommendedName>
        <alternativeName>
            <fullName evidence="1">D-glycero-beta-D-manno-heptose 1-phosphate adenylyltransferase</fullName>
        </alternativeName>
    </domain>
</protein>
<comment type="function">
    <text evidence="1">Catalyzes the phosphorylation of D-glycero-D-manno-heptose 7-phosphate at the C-1 position to selectively form D-glycero-beta-D-manno-heptose-1,7-bisphosphate.</text>
</comment>
<comment type="function">
    <text evidence="1">Catalyzes the ADP transfer from ATP to D-glycero-beta-D-manno-heptose 1-phosphate, yielding ADP-D-glycero-beta-D-manno-heptose.</text>
</comment>
<comment type="catalytic activity">
    <reaction evidence="1">
        <text>D-glycero-beta-D-manno-heptose 7-phosphate + ATP = D-glycero-beta-D-manno-heptose 1,7-bisphosphate + ADP + H(+)</text>
        <dbReference type="Rhea" id="RHEA:27473"/>
        <dbReference type="ChEBI" id="CHEBI:15378"/>
        <dbReference type="ChEBI" id="CHEBI:30616"/>
        <dbReference type="ChEBI" id="CHEBI:60204"/>
        <dbReference type="ChEBI" id="CHEBI:60208"/>
        <dbReference type="ChEBI" id="CHEBI:456216"/>
        <dbReference type="EC" id="2.7.1.167"/>
    </reaction>
</comment>
<comment type="catalytic activity">
    <reaction evidence="1">
        <text>D-glycero-beta-D-manno-heptose 1-phosphate + ATP + H(+) = ADP-D-glycero-beta-D-manno-heptose + diphosphate</text>
        <dbReference type="Rhea" id="RHEA:27465"/>
        <dbReference type="ChEBI" id="CHEBI:15378"/>
        <dbReference type="ChEBI" id="CHEBI:30616"/>
        <dbReference type="ChEBI" id="CHEBI:33019"/>
        <dbReference type="ChEBI" id="CHEBI:59967"/>
        <dbReference type="ChEBI" id="CHEBI:61593"/>
        <dbReference type="EC" id="2.7.7.70"/>
    </reaction>
</comment>
<comment type="pathway">
    <text evidence="1">Nucleotide-sugar biosynthesis; ADP-L-glycero-beta-D-manno-heptose biosynthesis; ADP-L-glycero-beta-D-manno-heptose from D-glycero-beta-D-manno-heptose 7-phosphate: step 1/4.</text>
</comment>
<comment type="pathway">
    <text evidence="1">Nucleotide-sugar biosynthesis; ADP-L-glycero-beta-D-manno-heptose biosynthesis; ADP-L-glycero-beta-D-manno-heptose from D-glycero-beta-D-manno-heptose 7-phosphate: step 3/4.</text>
</comment>
<comment type="subunit">
    <text evidence="1">Homodimer.</text>
</comment>
<comment type="similarity">
    <text evidence="1">In the N-terminal section; belongs to the carbohydrate kinase PfkB family.</text>
</comment>
<comment type="similarity">
    <text evidence="1">In the C-terminal section; belongs to the cytidylyltransferase family.</text>
</comment>
<accession>B6JM82</accession>